<comment type="function">
    <text>Core component of nucleosome. Nucleosomes wrap and compact DNA into chromatin, limiting DNA accessibility to the cellular machineries which require DNA as a template. Histones thereby play a central role in transcription regulation, DNA repair, DNA replication and chromosomal stability. DNA accessibility is regulated via a complex set of post-translational modifications of histones, also called histone code, and nucleosome remodeling.</text>
</comment>
<comment type="subunit">
    <text>The nucleosome is a histone octamer containing two molecules each of H2A, H2B, H3 and H4 assembled in one H3-H4 heterotetramer and two H2A-H2B heterodimers. The octamer wraps approximately 147 bp of DNA.</text>
</comment>
<comment type="subcellular location">
    <subcellularLocation>
        <location>Nucleus</location>
    </subcellularLocation>
    <subcellularLocation>
        <location>Chromosome</location>
    </subcellularLocation>
</comment>
<comment type="PTM">
    <text evidence="1">Monoubiquitination of Lys-119 gives a specific tag for epigenetic transcriptional repression.</text>
</comment>
<comment type="PTM">
    <text evidence="1">Phosphorylation of Ser-2 directly represses transcription.</text>
</comment>
<comment type="similarity">
    <text evidence="3">Belongs to the histone H2A family.</text>
</comment>
<protein>
    <recommendedName>
        <fullName>Late histone H2A.2.1</fullName>
    </recommendedName>
</protein>
<proteinExistence type="evidence at transcript level"/>
<reference key="1">
    <citation type="journal article" date="1986" name="Mol. Cell. Biol.">
        <title>Characterization of two nonallelic pairs of late histone H2A and H2B genes of the sea urchin: differential regulation in the embryo and tissue-specific expression in the adult.</title>
        <authorList>
            <person name="Kemler I."/>
            <person name="Busslinger M."/>
        </authorList>
    </citation>
    <scope>NUCLEOTIDE SEQUENCE [GENOMIC DNA]</scope>
</reference>
<reference key="2">
    <citation type="journal article" date="1985" name="Proc. Natl. Acad. Sci. U.S.A.">
        <title>Synthesis of sperm and late histone cDNAs of the sea urchin with a primer complementary to the conserved 3' terminal palindrome: evidence for tissue-specific and more general histone gene variants.</title>
        <authorList>
            <person name="Busslinger M."/>
            <person name="Barberis A."/>
        </authorList>
    </citation>
    <scope>NUCLEOTIDE SEQUENCE [MRNA]</scope>
</reference>
<dbReference type="EMBL" id="M11085">
    <property type="protein sequence ID" value="AAA30018.1"/>
    <property type="molecule type" value="mRNA"/>
</dbReference>
<dbReference type="EMBL" id="M14140">
    <property type="protein sequence ID" value="AAA30016.1"/>
    <property type="molecule type" value="Genomic_DNA"/>
</dbReference>
<dbReference type="PIR" id="A25077">
    <property type="entry name" value="A25077"/>
</dbReference>
<dbReference type="SMR" id="P04736"/>
<dbReference type="GO" id="GO:0000786">
    <property type="term" value="C:nucleosome"/>
    <property type="evidence" value="ECO:0007669"/>
    <property type="project" value="UniProtKB-KW"/>
</dbReference>
<dbReference type="GO" id="GO:0005634">
    <property type="term" value="C:nucleus"/>
    <property type="evidence" value="ECO:0007669"/>
    <property type="project" value="UniProtKB-SubCell"/>
</dbReference>
<dbReference type="GO" id="GO:0003677">
    <property type="term" value="F:DNA binding"/>
    <property type="evidence" value="ECO:0007669"/>
    <property type="project" value="UniProtKB-KW"/>
</dbReference>
<dbReference type="GO" id="GO:0046982">
    <property type="term" value="F:protein heterodimerization activity"/>
    <property type="evidence" value="ECO:0007669"/>
    <property type="project" value="InterPro"/>
</dbReference>
<dbReference type="GO" id="GO:0030527">
    <property type="term" value="F:structural constituent of chromatin"/>
    <property type="evidence" value="ECO:0007669"/>
    <property type="project" value="InterPro"/>
</dbReference>
<dbReference type="CDD" id="cd00074">
    <property type="entry name" value="HFD_H2A"/>
    <property type="match status" value="1"/>
</dbReference>
<dbReference type="FunFam" id="1.10.20.10:FF:000020">
    <property type="entry name" value="Histone H2A"/>
    <property type="match status" value="1"/>
</dbReference>
<dbReference type="Gene3D" id="1.10.20.10">
    <property type="entry name" value="Histone, subunit A"/>
    <property type="match status" value="1"/>
</dbReference>
<dbReference type="InterPro" id="IPR009072">
    <property type="entry name" value="Histone-fold"/>
</dbReference>
<dbReference type="InterPro" id="IPR002119">
    <property type="entry name" value="Histone_H2A"/>
</dbReference>
<dbReference type="InterPro" id="IPR007125">
    <property type="entry name" value="Histone_H2A/H2B/H3"/>
</dbReference>
<dbReference type="InterPro" id="IPR032454">
    <property type="entry name" value="Histone_H2A_C"/>
</dbReference>
<dbReference type="InterPro" id="IPR032458">
    <property type="entry name" value="Histone_H2A_CS"/>
</dbReference>
<dbReference type="PANTHER" id="PTHR23430">
    <property type="entry name" value="HISTONE H2A"/>
    <property type="match status" value="1"/>
</dbReference>
<dbReference type="Pfam" id="PF00125">
    <property type="entry name" value="Histone"/>
    <property type="match status" value="1"/>
</dbReference>
<dbReference type="Pfam" id="PF16211">
    <property type="entry name" value="Histone_H2A_C"/>
    <property type="match status" value="1"/>
</dbReference>
<dbReference type="PRINTS" id="PR00620">
    <property type="entry name" value="HISTONEH2A"/>
</dbReference>
<dbReference type="SMART" id="SM00414">
    <property type="entry name" value="H2A"/>
    <property type="match status" value="1"/>
</dbReference>
<dbReference type="SUPFAM" id="SSF47113">
    <property type="entry name" value="Histone-fold"/>
    <property type="match status" value="1"/>
</dbReference>
<dbReference type="PROSITE" id="PS00046">
    <property type="entry name" value="HISTONE_H2A"/>
    <property type="match status" value="1"/>
</dbReference>
<organism>
    <name type="scientific">Psammechinus miliaris</name>
    <name type="common">Green sea urchin</name>
    <name type="synonym">Echinus miliaris</name>
    <dbReference type="NCBI Taxonomy" id="7660"/>
    <lineage>
        <taxon>Eukaryota</taxon>
        <taxon>Metazoa</taxon>
        <taxon>Echinodermata</taxon>
        <taxon>Eleutherozoa</taxon>
        <taxon>Echinozoa</taxon>
        <taxon>Echinoidea</taxon>
        <taxon>Euechinoidea</taxon>
        <taxon>Echinacea</taxon>
        <taxon>Camarodonta</taxon>
        <taxon>Echinidea</taxon>
        <taxon>Parechinidae</taxon>
        <taxon>Psammechinus</taxon>
    </lineage>
</organism>
<feature type="initiator methionine" description="Removed" evidence="1">
    <location>
        <position position="1"/>
    </location>
</feature>
<feature type="chain" id="PRO_0000055271" description="Late histone H2A.2.1">
    <location>
        <begin position="2"/>
        <end position="124"/>
    </location>
</feature>
<feature type="region of interest" description="Disordered" evidence="2">
    <location>
        <begin position="1"/>
        <end position="21"/>
    </location>
</feature>
<feature type="compositionally biased region" description="Basic residues" evidence="2">
    <location>
        <begin position="1"/>
        <end position="18"/>
    </location>
</feature>
<feature type="modified residue" description="N-acetylserine" evidence="1">
    <location>
        <position position="2"/>
    </location>
</feature>
<feature type="modified residue" description="Phosphoserine" evidence="1">
    <location>
        <position position="2"/>
    </location>
</feature>
<feature type="modified residue" description="N5-methylglutamine" evidence="1">
    <location>
        <position position="104"/>
    </location>
</feature>
<feature type="cross-link" description="Glycyl lysine isopeptide (Lys-Gly) (interchain with G-Cter in ubiquitin)" evidence="1">
    <location>
        <position position="119"/>
    </location>
</feature>
<feature type="sequence conflict" description="In Ref. 2; possible variant." evidence="3" ref="2">
    <original>T</original>
    <variation>A</variation>
    <location>
        <position position="113"/>
    </location>
</feature>
<sequence>MSGRGKGAKAKSKAKSRSSRAGLQFPVGRVHRFLKKGNYGNRVGAGAPVYLAAVLEYLTAEILELAGNAARDNKKSRIIPRHLQLAVRNDEELNKLLGGVTIAQGGVLPNIQTVLLPKKTGKSA</sequence>
<keyword id="KW-0007">Acetylation</keyword>
<keyword id="KW-0158">Chromosome</keyword>
<keyword id="KW-0238">DNA-binding</keyword>
<keyword id="KW-1017">Isopeptide bond</keyword>
<keyword id="KW-0488">Methylation</keyword>
<keyword id="KW-0544">Nucleosome core</keyword>
<keyword id="KW-0539">Nucleus</keyword>
<keyword id="KW-0597">Phosphoprotein</keyword>
<keyword id="KW-0832">Ubl conjugation</keyword>
<evidence type="ECO:0000250" key="1"/>
<evidence type="ECO:0000256" key="2">
    <source>
        <dbReference type="SAM" id="MobiDB-lite"/>
    </source>
</evidence>
<evidence type="ECO:0000305" key="3"/>
<accession>P04736</accession>
<name>H2A2_PSAMI</name>